<reference key="1">
    <citation type="submission" date="2007-07" db="EMBL/GenBank/DDBJ databases">
        <title>Genome sequence of Campylobacter curvus 525.92 isolated from human feces.</title>
        <authorList>
            <person name="Fouts D.E."/>
            <person name="Mongodin E.F."/>
            <person name="Puiu D."/>
            <person name="Sebastian Y."/>
            <person name="Miller W.G."/>
            <person name="Mandrell R.E."/>
            <person name="Lastovica A.J."/>
            <person name="Nelson K.E."/>
        </authorList>
    </citation>
    <scope>NUCLEOTIDE SEQUENCE [LARGE SCALE GENOMIC DNA]</scope>
    <source>
        <strain>525.92</strain>
    </source>
</reference>
<gene>
    <name evidence="1" type="primary">ispG</name>
    <name type="ordered locus">Ccur92_11920</name>
    <name type="ORF">CCV52592_0322</name>
</gene>
<name>ISPG_CAMC5</name>
<proteinExistence type="inferred from homology"/>
<protein>
    <recommendedName>
        <fullName evidence="1">4-hydroxy-3-methylbut-2-en-1-yl diphosphate synthase (flavodoxin)</fullName>
        <ecNumber evidence="1">1.17.7.3</ecNumber>
    </recommendedName>
    <alternativeName>
        <fullName evidence="1">1-hydroxy-2-methyl-2-(E)-butenyl 4-diphosphate synthase</fullName>
    </alternativeName>
</protein>
<dbReference type="EC" id="1.17.7.3" evidence="1"/>
<dbReference type="EMBL" id="CP000767">
    <property type="protein sequence ID" value="EAU00055.1"/>
    <property type="molecule type" value="Genomic_DNA"/>
</dbReference>
<dbReference type="RefSeq" id="WP_011992438.1">
    <property type="nucleotide sequence ID" value="NC_009715.2"/>
</dbReference>
<dbReference type="SMR" id="A7GZ54"/>
<dbReference type="STRING" id="360105.CCV52592_0322"/>
<dbReference type="KEGG" id="ccv:CCV52592_0322"/>
<dbReference type="HOGENOM" id="CLU_042258_0_0_7"/>
<dbReference type="OrthoDB" id="9803214at2"/>
<dbReference type="UniPathway" id="UPA00056">
    <property type="reaction ID" value="UER00096"/>
</dbReference>
<dbReference type="Proteomes" id="UP000006380">
    <property type="component" value="Chromosome"/>
</dbReference>
<dbReference type="GO" id="GO:0051539">
    <property type="term" value="F:4 iron, 4 sulfur cluster binding"/>
    <property type="evidence" value="ECO:0007669"/>
    <property type="project" value="UniProtKB-UniRule"/>
</dbReference>
<dbReference type="GO" id="GO:0046429">
    <property type="term" value="F:4-hydroxy-3-methylbut-2-en-1-yl diphosphate synthase activity (ferredoxin)"/>
    <property type="evidence" value="ECO:0007669"/>
    <property type="project" value="UniProtKB-UniRule"/>
</dbReference>
<dbReference type="GO" id="GO:0141197">
    <property type="term" value="F:4-hydroxy-3-methylbut-2-enyl-diphosphate synthase activity (flavodoxin)"/>
    <property type="evidence" value="ECO:0007669"/>
    <property type="project" value="UniProtKB-EC"/>
</dbReference>
<dbReference type="GO" id="GO:0005506">
    <property type="term" value="F:iron ion binding"/>
    <property type="evidence" value="ECO:0007669"/>
    <property type="project" value="InterPro"/>
</dbReference>
<dbReference type="GO" id="GO:0019288">
    <property type="term" value="P:isopentenyl diphosphate biosynthetic process, methylerythritol 4-phosphate pathway"/>
    <property type="evidence" value="ECO:0007669"/>
    <property type="project" value="UniProtKB-UniRule"/>
</dbReference>
<dbReference type="GO" id="GO:0016114">
    <property type="term" value="P:terpenoid biosynthetic process"/>
    <property type="evidence" value="ECO:0007669"/>
    <property type="project" value="InterPro"/>
</dbReference>
<dbReference type="FunFam" id="3.20.20.20:FF:000001">
    <property type="entry name" value="4-hydroxy-3-methylbut-2-en-1-yl diphosphate synthase (flavodoxin)"/>
    <property type="match status" value="1"/>
</dbReference>
<dbReference type="Gene3D" id="3.20.20.20">
    <property type="entry name" value="Dihydropteroate synthase-like"/>
    <property type="match status" value="1"/>
</dbReference>
<dbReference type="Gene3D" id="3.30.413.10">
    <property type="entry name" value="Sulfite Reductase Hemoprotein, domain 1"/>
    <property type="match status" value="1"/>
</dbReference>
<dbReference type="HAMAP" id="MF_00159">
    <property type="entry name" value="IspG"/>
    <property type="match status" value="1"/>
</dbReference>
<dbReference type="InterPro" id="IPR011005">
    <property type="entry name" value="Dihydropteroate_synth-like_sf"/>
</dbReference>
<dbReference type="InterPro" id="IPR016425">
    <property type="entry name" value="IspG_bac"/>
</dbReference>
<dbReference type="InterPro" id="IPR004588">
    <property type="entry name" value="IspG_bac-typ"/>
</dbReference>
<dbReference type="InterPro" id="IPR045854">
    <property type="entry name" value="NO2/SO3_Rdtase_4Fe4S_sf"/>
</dbReference>
<dbReference type="NCBIfam" id="TIGR00612">
    <property type="entry name" value="ispG_gcpE"/>
    <property type="match status" value="1"/>
</dbReference>
<dbReference type="NCBIfam" id="NF001540">
    <property type="entry name" value="PRK00366.1"/>
    <property type="match status" value="1"/>
</dbReference>
<dbReference type="PANTHER" id="PTHR30454">
    <property type="entry name" value="4-HYDROXY-3-METHYLBUT-2-EN-1-YL DIPHOSPHATE SYNTHASE"/>
    <property type="match status" value="1"/>
</dbReference>
<dbReference type="PANTHER" id="PTHR30454:SF0">
    <property type="entry name" value="4-HYDROXY-3-METHYLBUT-2-EN-1-YL DIPHOSPHATE SYNTHASE (FERREDOXIN), CHLOROPLASTIC"/>
    <property type="match status" value="1"/>
</dbReference>
<dbReference type="Pfam" id="PF04551">
    <property type="entry name" value="GcpE"/>
    <property type="match status" value="1"/>
</dbReference>
<dbReference type="PIRSF" id="PIRSF004640">
    <property type="entry name" value="IspG"/>
    <property type="match status" value="1"/>
</dbReference>
<dbReference type="SUPFAM" id="SSF51717">
    <property type="entry name" value="Dihydropteroate synthetase-like"/>
    <property type="match status" value="1"/>
</dbReference>
<dbReference type="SUPFAM" id="SSF56014">
    <property type="entry name" value="Nitrite and sulphite reductase 4Fe-4S domain-like"/>
    <property type="match status" value="1"/>
</dbReference>
<feature type="chain" id="PRO_1000071537" description="4-hydroxy-3-methylbut-2-en-1-yl diphosphate synthase (flavodoxin)">
    <location>
        <begin position="1"/>
        <end position="352"/>
    </location>
</feature>
<feature type="binding site" evidence="1">
    <location>
        <position position="262"/>
    </location>
    <ligand>
        <name>[4Fe-4S] cluster</name>
        <dbReference type="ChEBI" id="CHEBI:49883"/>
    </ligand>
</feature>
<feature type="binding site" evidence="1">
    <location>
        <position position="265"/>
    </location>
    <ligand>
        <name>[4Fe-4S] cluster</name>
        <dbReference type="ChEBI" id="CHEBI:49883"/>
    </ligand>
</feature>
<feature type="binding site" evidence="1">
    <location>
        <position position="297"/>
    </location>
    <ligand>
        <name>[4Fe-4S] cluster</name>
        <dbReference type="ChEBI" id="CHEBI:49883"/>
    </ligand>
</feature>
<feature type="binding site" evidence="1">
    <location>
        <position position="304"/>
    </location>
    <ligand>
        <name>[4Fe-4S] cluster</name>
        <dbReference type="ChEBI" id="CHEBI:49883"/>
    </ligand>
</feature>
<keyword id="KW-0004">4Fe-4S</keyword>
<keyword id="KW-0408">Iron</keyword>
<keyword id="KW-0411">Iron-sulfur</keyword>
<keyword id="KW-0414">Isoprene biosynthesis</keyword>
<keyword id="KW-0479">Metal-binding</keyword>
<keyword id="KW-0560">Oxidoreductase</keyword>
<keyword id="KW-1185">Reference proteome</keyword>
<accession>A7GZ54</accession>
<evidence type="ECO:0000255" key="1">
    <source>
        <dbReference type="HAMAP-Rule" id="MF_00159"/>
    </source>
</evidence>
<sequence>MQRYPTKQIKIRDVAIGGDAPIPVQSMTFSKTKDVKGTLAQIQRLYFAGCDIVRCAVLDKEDAKALREIVAKSPLPVVADIHFNHIYAVMVSEYVDAIRINPGNIGSKERIKAVVDACKQRKIPIRIGVNSGSLEKQFEERYGRSVEAMVASAMYNINLLEDFDFTDIKISLKSSDVERTMQAYRTLRPKVPYPFHLGVTEAGTTFHATIKSAIALGGLLLEGIGDTMRVSITGELEEEIKVAKAILKDSGRQREGLNIISCPTCGRLQSDLMKAIKIVEEKTKHIKEPLNVSVMGCVVNAIGEAKGADVAIAFGKESGLIMRRGEVVARLKESELVDRFLAEIDDEIKSRE</sequence>
<comment type="function">
    <text evidence="1">Converts 2C-methyl-D-erythritol 2,4-cyclodiphosphate (ME-2,4cPP) into 1-hydroxy-2-methyl-2-(E)-butenyl 4-diphosphate.</text>
</comment>
<comment type="catalytic activity">
    <reaction evidence="1">
        <text>(2E)-4-hydroxy-3-methylbut-2-enyl diphosphate + oxidized [flavodoxin] + H2O + 2 H(+) = 2-C-methyl-D-erythritol 2,4-cyclic diphosphate + reduced [flavodoxin]</text>
        <dbReference type="Rhea" id="RHEA:43604"/>
        <dbReference type="Rhea" id="RHEA-COMP:10622"/>
        <dbReference type="Rhea" id="RHEA-COMP:10623"/>
        <dbReference type="ChEBI" id="CHEBI:15377"/>
        <dbReference type="ChEBI" id="CHEBI:15378"/>
        <dbReference type="ChEBI" id="CHEBI:57618"/>
        <dbReference type="ChEBI" id="CHEBI:58210"/>
        <dbReference type="ChEBI" id="CHEBI:58483"/>
        <dbReference type="ChEBI" id="CHEBI:128753"/>
        <dbReference type="EC" id="1.17.7.3"/>
    </reaction>
</comment>
<comment type="cofactor">
    <cofactor evidence="1">
        <name>[4Fe-4S] cluster</name>
        <dbReference type="ChEBI" id="CHEBI:49883"/>
    </cofactor>
    <text evidence="1">Binds 1 [4Fe-4S] cluster.</text>
</comment>
<comment type="pathway">
    <text evidence="1">Isoprenoid biosynthesis; isopentenyl diphosphate biosynthesis via DXP pathway; isopentenyl diphosphate from 1-deoxy-D-xylulose 5-phosphate: step 5/6.</text>
</comment>
<comment type="similarity">
    <text evidence="1">Belongs to the IspG family.</text>
</comment>
<organism>
    <name type="scientific">Campylobacter curvus (strain 525.92)</name>
    <dbReference type="NCBI Taxonomy" id="360105"/>
    <lineage>
        <taxon>Bacteria</taxon>
        <taxon>Pseudomonadati</taxon>
        <taxon>Campylobacterota</taxon>
        <taxon>Epsilonproteobacteria</taxon>
        <taxon>Campylobacterales</taxon>
        <taxon>Campylobacteraceae</taxon>
        <taxon>Campylobacter</taxon>
    </lineage>
</organism>